<reference key="1">
    <citation type="submission" date="2007-09" db="EMBL/GenBank/DDBJ databases">
        <title>Complete sequence of chromosome of Serratia proteamaculans 568.</title>
        <authorList>
            <consortium name="US DOE Joint Genome Institute"/>
            <person name="Copeland A."/>
            <person name="Lucas S."/>
            <person name="Lapidus A."/>
            <person name="Barry K."/>
            <person name="Glavina del Rio T."/>
            <person name="Dalin E."/>
            <person name="Tice H."/>
            <person name="Pitluck S."/>
            <person name="Chain P."/>
            <person name="Malfatti S."/>
            <person name="Shin M."/>
            <person name="Vergez L."/>
            <person name="Schmutz J."/>
            <person name="Larimer F."/>
            <person name="Land M."/>
            <person name="Hauser L."/>
            <person name="Kyrpides N."/>
            <person name="Kim E."/>
            <person name="Taghavi S."/>
            <person name="Newman L."/>
            <person name="Vangronsveld J."/>
            <person name="van der Lelie D."/>
            <person name="Richardson P."/>
        </authorList>
    </citation>
    <scope>NUCLEOTIDE SEQUENCE [LARGE SCALE GENOMIC DNA]</scope>
    <source>
        <strain>568</strain>
    </source>
</reference>
<feature type="chain" id="PRO_1000064251" description="Protein TsgA homolog">
    <location>
        <begin position="1"/>
        <end position="394"/>
    </location>
</feature>
<feature type="transmembrane region" description="Helical" evidence="1">
    <location>
        <begin position="11"/>
        <end position="31"/>
    </location>
</feature>
<feature type="transmembrane region" description="Helical" evidence="1">
    <location>
        <begin position="51"/>
        <end position="71"/>
    </location>
</feature>
<feature type="transmembrane region" description="Helical" evidence="1">
    <location>
        <begin position="76"/>
        <end position="96"/>
    </location>
</feature>
<feature type="transmembrane region" description="Helical" evidence="1">
    <location>
        <begin position="101"/>
        <end position="121"/>
    </location>
</feature>
<feature type="transmembrane region" description="Helical" evidence="1">
    <location>
        <begin position="134"/>
        <end position="154"/>
    </location>
</feature>
<feature type="transmembrane region" description="Helical" evidence="1">
    <location>
        <begin position="162"/>
        <end position="182"/>
    </location>
</feature>
<feature type="transmembrane region" description="Helical" evidence="1">
    <location>
        <begin position="206"/>
        <end position="226"/>
    </location>
</feature>
<feature type="transmembrane region" description="Helical" evidence="1">
    <location>
        <begin position="251"/>
        <end position="271"/>
    </location>
</feature>
<feature type="transmembrane region" description="Helical" evidence="1">
    <location>
        <begin position="274"/>
        <end position="294"/>
    </location>
</feature>
<feature type="transmembrane region" description="Helical" evidence="1">
    <location>
        <begin position="302"/>
        <end position="322"/>
    </location>
</feature>
<feature type="transmembrane region" description="Helical" evidence="1">
    <location>
        <begin position="334"/>
        <end position="354"/>
    </location>
</feature>
<feature type="transmembrane region" description="Helical" evidence="1">
    <location>
        <begin position="363"/>
        <end position="383"/>
    </location>
</feature>
<keyword id="KW-0997">Cell inner membrane</keyword>
<keyword id="KW-1003">Cell membrane</keyword>
<keyword id="KW-0472">Membrane</keyword>
<keyword id="KW-0812">Transmembrane</keyword>
<keyword id="KW-1133">Transmembrane helix</keyword>
<proteinExistence type="inferred from homology"/>
<evidence type="ECO:0000255" key="1">
    <source>
        <dbReference type="HAMAP-Rule" id="MF_01044"/>
    </source>
</evidence>
<protein>
    <recommendedName>
        <fullName evidence="1">Protein TsgA homolog</fullName>
    </recommendedName>
</protein>
<dbReference type="EMBL" id="CP000826">
    <property type="protein sequence ID" value="ABV43686.1"/>
    <property type="molecule type" value="Genomic_DNA"/>
</dbReference>
<dbReference type="SMR" id="A8GKP6"/>
<dbReference type="STRING" id="399741.Spro_4593"/>
<dbReference type="KEGG" id="spe:Spro_4593"/>
<dbReference type="eggNOG" id="COG0738">
    <property type="taxonomic scope" value="Bacteria"/>
</dbReference>
<dbReference type="HOGENOM" id="CLU_056916_0_0_6"/>
<dbReference type="OrthoDB" id="8577032at2"/>
<dbReference type="GO" id="GO:0005886">
    <property type="term" value="C:plasma membrane"/>
    <property type="evidence" value="ECO:0007669"/>
    <property type="project" value="UniProtKB-SubCell"/>
</dbReference>
<dbReference type="GO" id="GO:0022857">
    <property type="term" value="F:transmembrane transporter activity"/>
    <property type="evidence" value="ECO:0007669"/>
    <property type="project" value="InterPro"/>
</dbReference>
<dbReference type="Gene3D" id="1.20.1250.20">
    <property type="entry name" value="MFS general substrate transporter like domains"/>
    <property type="match status" value="2"/>
</dbReference>
<dbReference type="HAMAP" id="MF_01044">
    <property type="entry name" value="MFS_TsgA"/>
    <property type="match status" value="1"/>
</dbReference>
<dbReference type="InterPro" id="IPR011701">
    <property type="entry name" value="MFS"/>
</dbReference>
<dbReference type="InterPro" id="IPR020846">
    <property type="entry name" value="MFS_dom"/>
</dbReference>
<dbReference type="InterPro" id="IPR036259">
    <property type="entry name" value="MFS_trans_sf"/>
</dbReference>
<dbReference type="InterPro" id="IPR023528">
    <property type="entry name" value="MFS_TsgA"/>
</dbReference>
<dbReference type="InterPro" id="IPR050375">
    <property type="entry name" value="MFS_TsgA-like"/>
</dbReference>
<dbReference type="NCBIfam" id="NF002982">
    <property type="entry name" value="PRK03699.1"/>
    <property type="match status" value="1"/>
</dbReference>
<dbReference type="PANTHER" id="PTHR43702">
    <property type="entry name" value="L-FUCOSE-PROTON SYMPORTER"/>
    <property type="match status" value="1"/>
</dbReference>
<dbReference type="PANTHER" id="PTHR43702:SF3">
    <property type="entry name" value="PROTEIN TSGA"/>
    <property type="match status" value="1"/>
</dbReference>
<dbReference type="Pfam" id="PF07690">
    <property type="entry name" value="MFS_1"/>
    <property type="match status" value="1"/>
</dbReference>
<dbReference type="SUPFAM" id="SSF103473">
    <property type="entry name" value="MFS general substrate transporter"/>
    <property type="match status" value="1"/>
</dbReference>
<dbReference type="PROSITE" id="PS50850">
    <property type="entry name" value="MFS"/>
    <property type="match status" value="1"/>
</dbReference>
<gene>
    <name evidence="1" type="primary">tsgA</name>
    <name type="ordered locus">Spro_4593</name>
</gene>
<sequence length="394" mass="43291">MNDSNRLRLTWISYFSYALTGALVIVTGMVMGNIAEYFNLPVSSMSNTFTFLNAGILISIFLNAWLMEIIPLKRQLMFGFVLMVLAIAGLMLGKSLTMFSLCMFILGVVSGITMSIGTFLITHMYAGRQRGSRLLFTDSFFSMAGMIFPIVAAMLLARQIGWYWVYACIGLLYVGIFVLTLFSEFPVLGNKGADAGQPVVKEKWGIGVLFLSIAALCYILGQLGFIQWVPEYATKSFGMDISQAGKLVSDFWTSYMIGMWVFSFILRFFDLQRIVTILAALATGAMYLFVSTDNPEHLSYYIMALGFVSSAIYTTLITLGSLQTKVSSPKLVNFILTCGTIGTMLTFVVTGPIVAKGGAHAALTTANGLYLAVFVMCLLLGFVTKHRSHGHVTH</sequence>
<comment type="subcellular location">
    <subcellularLocation>
        <location evidence="1">Cell inner membrane</location>
        <topology evidence="1">Multi-pass membrane protein</topology>
    </subcellularLocation>
</comment>
<comment type="similarity">
    <text evidence="1">Belongs to the major facilitator superfamily. TsgA family.</text>
</comment>
<name>TSGA_SERP5</name>
<accession>A8GKP6</accession>
<organism>
    <name type="scientific">Serratia proteamaculans (strain 568)</name>
    <dbReference type="NCBI Taxonomy" id="399741"/>
    <lineage>
        <taxon>Bacteria</taxon>
        <taxon>Pseudomonadati</taxon>
        <taxon>Pseudomonadota</taxon>
        <taxon>Gammaproteobacteria</taxon>
        <taxon>Enterobacterales</taxon>
        <taxon>Yersiniaceae</taxon>
        <taxon>Serratia</taxon>
    </lineage>
</organism>